<keyword id="KW-0050">Antiport</keyword>
<keyword id="KW-0997">Cell inner membrane</keyword>
<keyword id="KW-1003">Cell membrane</keyword>
<keyword id="KW-0406">Ion transport</keyword>
<keyword id="KW-0472">Membrane</keyword>
<keyword id="KW-0630">Potassium</keyword>
<keyword id="KW-0633">Potassium transport</keyword>
<keyword id="KW-0812">Transmembrane</keyword>
<keyword id="KW-1133">Transmembrane helix</keyword>
<keyword id="KW-0813">Transport</keyword>
<accession>B4SUV7</accession>
<feature type="chain" id="PRO_1000145529" description="Glutathione-regulated potassium-efflux system protein KefB">
    <location>
        <begin position="1"/>
        <end position="601"/>
    </location>
</feature>
<feature type="transmembrane region" description="Helical" evidence="1">
    <location>
        <begin position="4"/>
        <end position="24"/>
    </location>
</feature>
<feature type="transmembrane region" description="Helical" evidence="1">
    <location>
        <begin position="29"/>
        <end position="49"/>
    </location>
</feature>
<feature type="transmembrane region" description="Helical" evidence="1">
    <location>
        <begin position="55"/>
        <end position="75"/>
    </location>
</feature>
<feature type="transmembrane region" description="Helical" evidence="1">
    <location>
        <begin position="87"/>
        <end position="107"/>
    </location>
</feature>
<feature type="transmembrane region" description="Helical" evidence="1">
    <location>
        <begin position="111"/>
        <end position="131"/>
    </location>
</feature>
<feature type="transmembrane region" description="Helical" evidence="1">
    <location>
        <begin position="152"/>
        <end position="172"/>
    </location>
</feature>
<feature type="transmembrane region" description="Helical" evidence="1">
    <location>
        <begin position="177"/>
        <end position="197"/>
    </location>
</feature>
<feature type="transmembrane region" description="Helical" evidence="1">
    <location>
        <begin position="207"/>
        <end position="227"/>
    </location>
</feature>
<feature type="transmembrane region" description="Helical" evidence="1">
    <location>
        <begin position="230"/>
        <end position="250"/>
    </location>
</feature>
<feature type="transmembrane region" description="Helical" evidence="1">
    <location>
        <begin position="262"/>
        <end position="282"/>
    </location>
</feature>
<feature type="transmembrane region" description="Helical" evidence="1">
    <location>
        <begin position="284"/>
        <end position="304"/>
    </location>
</feature>
<feature type="transmembrane region" description="Helical" evidence="1">
    <location>
        <begin position="324"/>
        <end position="344"/>
    </location>
</feature>
<feature type="transmembrane region" description="Helical" evidence="1">
    <location>
        <begin position="356"/>
        <end position="376"/>
    </location>
</feature>
<feature type="domain" description="RCK N-terminal" evidence="2">
    <location>
        <begin position="400"/>
        <end position="519"/>
    </location>
</feature>
<protein>
    <recommendedName>
        <fullName evidence="1">Glutathione-regulated potassium-efflux system protein KefB</fullName>
    </recommendedName>
    <alternativeName>
        <fullName evidence="1">K(+)/H(+) antiporter</fullName>
    </alternativeName>
</protein>
<gene>
    <name evidence="1" type="primary">kefB</name>
    <name type="ordered locus">SNSL254_A3727</name>
</gene>
<evidence type="ECO:0000255" key="1">
    <source>
        <dbReference type="HAMAP-Rule" id="MF_01412"/>
    </source>
</evidence>
<evidence type="ECO:0000255" key="2">
    <source>
        <dbReference type="PROSITE-ProRule" id="PRU00543"/>
    </source>
</evidence>
<comment type="function">
    <text evidence="1">Pore-forming subunit of a potassium efflux system that confers protection against electrophiles. Catalyzes K(+)/H(+) antiport.</text>
</comment>
<comment type="subunit">
    <text evidence="1">Interacts with the regulatory subunit KefG.</text>
</comment>
<comment type="subcellular location">
    <subcellularLocation>
        <location evidence="1">Cell inner membrane</location>
        <topology evidence="1">Multi-pass membrane protein</topology>
    </subcellularLocation>
</comment>
<comment type="similarity">
    <text evidence="1">Belongs to the monovalent cation:proton antiporter 2 (CPA2) transporter (TC 2.A.37) family. KefB subfamily.</text>
</comment>
<name>KEFB_SALNS</name>
<reference key="1">
    <citation type="journal article" date="2011" name="J. Bacteriol.">
        <title>Comparative genomics of 28 Salmonella enterica isolates: evidence for CRISPR-mediated adaptive sublineage evolution.</title>
        <authorList>
            <person name="Fricke W.F."/>
            <person name="Mammel M.K."/>
            <person name="McDermott P.F."/>
            <person name="Tartera C."/>
            <person name="White D.G."/>
            <person name="Leclerc J.E."/>
            <person name="Ravel J."/>
            <person name="Cebula T.A."/>
        </authorList>
    </citation>
    <scope>NUCLEOTIDE SEQUENCE [LARGE SCALE GENOMIC DNA]</scope>
    <source>
        <strain>SL254</strain>
    </source>
</reference>
<dbReference type="EMBL" id="CP001113">
    <property type="protein sequence ID" value="ACF65117.1"/>
    <property type="molecule type" value="Genomic_DNA"/>
</dbReference>
<dbReference type="RefSeq" id="WP_000398139.1">
    <property type="nucleotide sequence ID" value="NZ_CCMR01000004.1"/>
</dbReference>
<dbReference type="SMR" id="B4SUV7"/>
<dbReference type="KEGG" id="see:SNSL254_A3727"/>
<dbReference type="HOGENOM" id="CLU_005126_9_3_6"/>
<dbReference type="Proteomes" id="UP000008824">
    <property type="component" value="Chromosome"/>
</dbReference>
<dbReference type="GO" id="GO:0005886">
    <property type="term" value="C:plasma membrane"/>
    <property type="evidence" value="ECO:0007669"/>
    <property type="project" value="UniProtKB-SubCell"/>
</dbReference>
<dbReference type="GO" id="GO:0015503">
    <property type="term" value="F:glutathione-regulated potassium exporter activity"/>
    <property type="evidence" value="ECO:0007669"/>
    <property type="project" value="UniProtKB-UniRule"/>
</dbReference>
<dbReference type="GO" id="GO:1902600">
    <property type="term" value="P:proton transmembrane transport"/>
    <property type="evidence" value="ECO:0007669"/>
    <property type="project" value="InterPro"/>
</dbReference>
<dbReference type="FunFam" id="1.20.1530.20:FF:000001">
    <property type="entry name" value="Glutathione-regulated potassium-efflux system protein KefB"/>
    <property type="match status" value="1"/>
</dbReference>
<dbReference type="FunFam" id="3.40.50.720:FF:000036">
    <property type="entry name" value="Glutathione-regulated potassium-efflux system protein KefB"/>
    <property type="match status" value="1"/>
</dbReference>
<dbReference type="Gene3D" id="1.20.1530.20">
    <property type="match status" value="1"/>
</dbReference>
<dbReference type="Gene3D" id="3.40.50.720">
    <property type="entry name" value="NAD(P)-binding Rossmann-like Domain"/>
    <property type="match status" value="1"/>
</dbReference>
<dbReference type="HAMAP" id="MF_01412">
    <property type="entry name" value="K_H_efflux_KefB"/>
    <property type="match status" value="1"/>
</dbReference>
<dbReference type="InterPro" id="IPR006153">
    <property type="entry name" value="Cation/H_exchanger_TM"/>
</dbReference>
<dbReference type="InterPro" id="IPR004771">
    <property type="entry name" value="K/H_exchanger"/>
</dbReference>
<dbReference type="InterPro" id="IPR020884">
    <property type="entry name" value="K_H_efflux_KefB"/>
</dbReference>
<dbReference type="InterPro" id="IPR006036">
    <property type="entry name" value="K_uptake_TrkA"/>
</dbReference>
<dbReference type="InterPro" id="IPR038770">
    <property type="entry name" value="Na+/solute_symporter_sf"/>
</dbReference>
<dbReference type="InterPro" id="IPR036291">
    <property type="entry name" value="NAD(P)-bd_dom_sf"/>
</dbReference>
<dbReference type="InterPro" id="IPR003148">
    <property type="entry name" value="RCK_N"/>
</dbReference>
<dbReference type="NCBIfam" id="TIGR00932">
    <property type="entry name" value="2a37"/>
    <property type="match status" value="1"/>
</dbReference>
<dbReference type="NCBIfam" id="NF002973">
    <property type="entry name" value="PRK03659.1"/>
    <property type="match status" value="1"/>
</dbReference>
<dbReference type="PANTHER" id="PTHR46157">
    <property type="entry name" value="K(+) EFFLUX ANTIPORTER 3, CHLOROPLASTIC"/>
    <property type="match status" value="1"/>
</dbReference>
<dbReference type="PANTHER" id="PTHR46157:SF4">
    <property type="entry name" value="K(+) EFFLUX ANTIPORTER 3, CHLOROPLASTIC"/>
    <property type="match status" value="1"/>
</dbReference>
<dbReference type="Pfam" id="PF00999">
    <property type="entry name" value="Na_H_Exchanger"/>
    <property type="match status" value="1"/>
</dbReference>
<dbReference type="Pfam" id="PF02254">
    <property type="entry name" value="TrkA_N"/>
    <property type="match status" value="1"/>
</dbReference>
<dbReference type="PRINTS" id="PR00335">
    <property type="entry name" value="KUPTAKETRKA"/>
</dbReference>
<dbReference type="SUPFAM" id="SSF51735">
    <property type="entry name" value="NAD(P)-binding Rossmann-fold domains"/>
    <property type="match status" value="1"/>
</dbReference>
<dbReference type="PROSITE" id="PS51201">
    <property type="entry name" value="RCK_N"/>
    <property type="match status" value="1"/>
</dbReference>
<sequence>MEGADLLTAGVLFLFAAVAAVPLAARLGIGAVLGYLLAGIAIGPWGLGFISDVDEILHFSELGVVFLMFIIGLELNPSRLWQLRRSIFGVGAAQVLLSAAVLAGLLMLADFLWQAAVVGGIGLAMSSTAMALQLMREKGMNRSESGQLGFSVLLFQDLAVIPALALVPLLAGSADEHFDWFKVAMKVLAFAVMLIGGRYLLRPVFRFIAASGVREVFTAATLLLVLSAALFMDALGLSMALGTFIAGVLLAESEYRHELENAIDPFKGLLLGLFFISVGMSLNLGVLYTHLLWVAASVVILVVIKMLTLYLLARVYGIRSSERMQFASVLSQGGEFAFVLFSTASSQRLFQGDQMALLLVTVTLSMMTTPLLMKGIDKWLSRRLNGPEENDEKPWVEDDKPQVIVVGFGRFGQVIARLLMANKMRITVLERDIGAVNLMRKYGYKVYYGDATQVELLRSAGAEAAESIVITCNEPEDTMKLVALCQQHFPHLHILARARGRVEAHELLQAGVTQFSRETFSSALELGRKTLVSLGMHPHQAQRAQLHFRRLDMRMLRELIPEHSDMVQISRAREARRELEEIFQREMQQERRQLDGWDEFE</sequence>
<organism>
    <name type="scientific">Salmonella newport (strain SL254)</name>
    <dbReference type="NCBI Taxonomy" id="423368"/>
    <lineage>
        <taxon>Bacteria</taxon>
        <taxon>Pseudomonadati</taxon>
        <taxon>Pseudomonadota</taxon>
        <taxon>Gammaproteobacteria</taxon>
        <taxon>Enterobacterales</taxon>
        <taxon>Enterobacteriaceae</taxon>
        <taxon>Salmonella</taxon>
    </lineage>
</organism>
<proteinExistence type="inferred from homology"/>